<reference key="1">
    <citation type="journal article" date="1996" name="Plant Mol. Biol.">
        <title>Characterization of eight new members of the calmodulin-like domain protein kinase gene family from Arabidopsis thaliana.</title>
        <authorList>
            <person name="Hrabak E.M."/>
            <person name="Dickmann L.J."/>
            <person name="Satterlee J.S."/>
            <person name="Sussman M.R."/>
        </authorList>
    </citation>
    <scope>NUCLEOTIDE SEQUENCE [MRNA] (ISOFORM 1)</scope>
    <source>
        <strain>cv. Columbia</strain>
    </source>
</reference>
<reference key="2">
    <citation type="journal article" date="2000" name="Nature">
        <title>Sequence and analysis of chromosome 5 of the plant Arabidopsis thaliana.</title>
        <authorList>
            <person name="Tabata S."/>
            <person name="Kaneko T."/>
            <person name="Nakamura Y."/>
            <person name="Kotani H."/>
            <person name="Kato T."/>
            <person name="Asamizu E."/>
            <person name="Miyajima N."/>
            <person name="Sasamoto S."/>
            <person name="Kimura T."/>
            <person name="Hosouchi T."/>
            <person name="Kawashima K."/>
            <person name="Kohara M."/>
            <person name="Matsumoto M."/>
            <person name="Matsuno A."/>
            <person name="Muraki A."/>
            <person name="Nakayama S."/>
            <person name="Nakazaki N."/>
            <person name="Naruo K."/>
            <person name="Okumura S."/>
            <person name="Shinpo S."/>
            <person name="Takeuchi C."/>
            <person name="Wada T."/>
            <person name="Watanabe A."/>
            <person name="Yamada M."/>
            <person name="Yasuda M."/>
            <person name="Sato S."/>
            <person name="de la Bastide M."/>
            <person name="Huang E."/>
            <person name="Spiegel L."/>
            <person name="Gnoj L."/>
            <person name="O'Shaughnessy A."/>
            <person name="Preston R."/>
            <person name="Habermann K."/>
            <person name="Murray J."/>
            <person name="Johnson D."/>
            <person name="Rohlfing T."/>
            <person name="Nelson J."/>
            <person name="Stoneking T."/>
            <person name="Pepin K."/>
            <person name="Spieth J."/>
            <person name="Sekhon M."/>
            <person name="Armstrong J."/>
            <person name="Becker M."/>
            <person name="Belter E."/>
            <person name="Cordum H."/>
            <person name="Cordes M."/>
            <person name="Courtney L."/>
            <person name="Courtney W."/>
            <person name="Dante M."/>
            <person name="Du H."/>
            <person name="Edwards J."/>
            <person name="Fryman J."/>
            <person name="Haakensen B."/>
            <person name="Lamar E."/>
            <person name="Latreille P."/>
            <person name="Leonard S."/>
            <person name="Meyer R."/>
            <person name="Mulvaney E."/>
            <person name="Ozersky P."/>
            <person name="Riley A."/>
            <person name="Strowmatt C."/>
            <person name="Wagner-McPherson C."/>
            <person name="Wollam A."/>
            <person name="Yoakum M."/>
            <person name="Bell M."/>
            <person name="Dedhia N."/>
            <person name="Parnell L."/>
            <person name="Shah R."/>
            <person name="Rodriguez M."/>
            <person name="Hoon See L."/>
            <person name="Vil D."/>
            <person name="Baker J."/>
            <person name="Kirchoff K."/>
            <person name="Toth K."/>
            <person name="King L."/>
            <person name="Bahret A."/>
            <person name="Miller B."/>
            <person name="Marra M.A."/>
            <person name="Martienssen R."/>
            <person name="McCombie W.R."/>
            <person name="Wilson R.K."/>
            <person name="Murphy G."/>
            <person name="Bancroft I."/>
            <person name="Volckaert G."/>
            <person name="Wambutt R."/>
            <person name="Duesterhoeft A."/>
            <person name="Stiekema W."/>
            <person name="Pohl T."/>
            <person name="Entian K.-D."/>
            <person name="Terryn N."/>
            <person name="Hartley N."/>
            <person name="Bent E."/>
            <person name="Johnson S."/>
            <person name="Langham S.-A."/>
            <person name="McCullagh B."/>
            <person name="Robben J."/>
            <person name="Grymonprez B."/>
            <person name="Zimmermann W."/>
            <person name="Ramsperger U."/>
            <person name="Wedler H."/>
            <person name="Balke K."/>
            <person name="Wedler E."/>
            <person name="Peters S."/>
            <person name="van Staveren M."/>
            <person name="Dirkse W."/>
            <person name="Mooijman P."/>
            <person name="Klein Lankhorst R."/>
            <person name="Weitzenegger T."/>
            <person name="Bothe G."/>
            <person name="Rose M."/>
            <person name="Hauf J."/>
            <person name="Berneiser S."/>
            <person name="Hempel S."/>
            <person name="Feldpausch M."/>
            <person name="Lamberth S."/>
            <person name="Villarroel R."/>
            <person name="Gielen J."/>
            <person name="Ardiles W."/>
            <person name="Bents O."/>
            <person name="Lemcke K."/>
            <person name="Kolesov G."/>
            <person name="Mayer K.F.X."/>
            <person name="Rudd S."/>
            <person name="Schoof H."/>
            <person name="Schueller C."/>
            <person name="Zaccaria P."/>
            <person name="Mewes H.-W."/>
            <person name="Bevan M."/>
            <person name="Fransz P.F."/>
        </authorList>
    </citation>
    <scope>NUCLEOTIDE SEQUENCE [LARGE SCALE GENOMIC DNA]</scope>
    <source>
        <strain>cv. Columbia</strain>
    </source>
</reference>
<reference key="3">
    <citation type="journal article" date="2017" name="Plant J.">
        <title>Araport11: a complete reannotation of the Arabidopsis thaliana reference genome.</title>
        <authorList>
            <person name="Cheng C.Y."/>
            <person name="Krishnakumar V."/>
            <person name="Chan A.P."/>
            <person name="Thibaud-Nissen F."/>
            <person name="Schobel S."/>
            <person name="Town C.D."/>
        </authorList>
    </citation>
    <scope>GENOME REANNOTATION</scope>
    <source>
        <strain>cv. Columbia</strain>
    </source>
</reference>
<reference key="4">
    <citation type="journal article" date="2003" name="Science">
        <title>Empirical analysis of transcriptional activity in the Arabidopsis genome.</title>
        <authorList>
            <person name="Yamada K."/>
            <person name="Lim J."/>
            <person name="Dale J.M."/>
            <person name="Chen H."/>
            <person name="Shinn P."/>
            <person name="Palm C.J."/>
            <person name="Southwick A.M."/>
            <person name="Wu H.C."/>
            <person name="Kim C.J."/>
            <person name="Nguyen M."/>
            <person name="Pham P.K."/>
            <person name="Cheuk R.F."/>
            <person name="Karlin-Newmann G."/>
            <person name="Liu S.X."/>
            <person name="Lam B."/>
            <person name="Sakano H."/>
            <person name="Wu T."/>
            <person name="Yu G."/>
            <person name="Miranda M."/>
            <person name="Quach H.L."/>
            <person name="Tripp M."/>
            <person name="Chang C.H."/>
            <person name="Lee J.M."/>
            <person name="Toriumi M.J."/>
            <person name="Chan M.M."/>
            <person name="Tang C.C."/>
            <person name="Onodera C.S."/>
            <person name="Deng J.M."/>
            <person name="Akiyama K."/>
            <person name="Ansari Y."/>
            <person name="Arakawa T."/>
            <person name="Banh J."/>
            <person name="Banno F."/>
            <person name="Bowser L."/>
            <person name="Brooks S.Y."/>
            <person name="Carninci P."/>
            <person name="Chao Q."/>
            <person name="Choy N."/>
            <person name="Enju A."/>
            <person name="Goldsmith A.D."/>
            <person name="Gurjal M."/>
            <person name="Hansen N.F."/>
            <person name="Hayashizaki Y."/>
            <person name="Johnson-Hopson C."/>
            <person name="Hsuan V.W."/>
            <person name="Iida K."/>
            <person name="Karnes M."/>
            <person name="Khan S."/>
            <person name="Koesema E."/>
            <person name="Ishida J."/>
            <person name="Jiang P.X."/>
            <person name="Jones T."/>
            <person name="Kawai J."/>
            <person name="Kamiya A."/>
            <person name="Meyers C."/>
            <person name="Nakajima M."/>
            <person name="Narusaka M."/>
            <person name="Seki M."/>
            <person name="Sakurai T."/>
            <person name="Satou M."/>
            <person name="Tamse R."/>
            <person name="Vaysberg M."/>
            <person name="Wallender E.K."/>
            <person name="Wong C."/>
            <person name="Yamamura Y."/>
            <person name="Yuan S."/>
            <person name="Shinozaki K."/>
            <person name="Davis R.W."/>
            <person name="Theologis A."/>
            <person name="Ecker J.R."/>
        </authorList>
    </citation>
    <scope>NUCLEOTIDE SEQUENCE [LARGE SCALE MRNA] (ISOFORM 1)</scope>
    <source>
        <strain>cv. Columbia</strain>
    </source>
</reference>
<reference key="5">
    <citation type="submission" date="2005-03" db="EMBL/GenBank/DDBJ databases">
        <title>Large-scale analysis of RIKEN Arabidopsis full-length (RAFL) cDNAs.</title>
        <authorList>
            <person name="Totoki Y."/>
            <person name="Seki M."/>
            <person name="Ishida J."/>
            <person name="Nakajima M."/>
            <person name="Enju A."/>
            <person name="Kamiya A."/>
            <person name="Narusaka M."/>
            <person name="Shin-i T."/>
            <person name="Nakagawa M."/>
            <person name="Sakamoto N."/>
            <person name="Oishi K."/>
            <person name="Kohara Y."/>
            <person name="Kobayashi M."/>
            <person name="Toyoda A."/>
            <person name="Sakaki Y."/>
            <person name="Sakurai T."/>
            <person name="Iida K."/>
            <person name="Akiyama K."/>
            <person name="Satou M."/>
            <person name="Toyoda T."/>
            <person name="Konagaya A."/>
            <person name="Carninci P."/>
            <person name="Kawai J."/>
            <person name="Hayashizaki Y."/>
            <person name="Shinozaki K."/>
        </authorList>
    </citation>
    <scope>NUCLEOTIDE SEQUENCE [LARGE SCALE MRNA] (ISOFORM 2)</scope>
    <source>
        <strain>cv. Columbia</strain>
    </source>
</reference>
<reference key="6">
    <citation type="journal article" date="2001" name="New Phytol.">
        <title>The CDPK superfamily of protein kinases.</title>
        <authorList>
            <person name="Harmon A.C."/>
            <person name="Gribskov M."/>
            <person name="Gubrium E."/>
            <person name="Harper J.F."/>
        </authorList>
    </citation>
    <scope>GENE FAMILY</scope>
    <scope>NOMENCLATURE</scope>
</reference>
<reference key="7">
    <citation type="journal article" date="2002" name="Plant Physiol.">
        <title>Calcium signaling through protein kinases. The Arabidopsis calcium-dependent protein kinase gene family.</title>
        <authorList>
            <person name="Cheng S.-H."/>
            <person name="Willmann M.R."/>
            <person name="Chen H.-C."/>
            <person name="Sheen J."/>
        </authorList>
    </citation>
    <scope>GENE FAMILY</scope>
    <scope>NOMENCLATURE</scope>
</reference>
<reference key="8">
    <citation type="journal article" date="2003" name="Plant Physiol.">
        <title>The Arabidopsis CDPK-SnRK superfamily of protein kinases.</title>
        <authorList>
            <person name="Hrabak E.M."/>
            <person name="Chan C.W.M."/>
            <person name="Gribskov M."/>
            <person name="Harper J.F."/>
            <person name="Choi J.H."/>
            <person name="Halford N."/>
            <person name="Kudla J."/>
            <person name="Luan S."/>
            <person name="Nimmo H.G."/>
            <person name="Sussman M.R."/>
            <person name="Thomas M."/>
            <person name="Walker-Simmons K."/>
            <person name="Zhu J.-K."/>
            <person name="Harmon A.C."/>
        </authorList>
    </citation>
    <scope>GENE FAMILY</scope>
    <scope>NOMENCLATURE</scope>
</reference>
<reference key="9">
    <citation type="journal article" date="2003" name="Plant Physiol.">
        <title>Subcellular targeting of nine calcium-dependent protein kinase isoforms from Arabidopsis.</title>
        <authorList>
            <person name="Dammann C."/>
            <person name="Ichida A."/>
            <person name="Hong B."/>
            <person name="Romanowsky S.M."/>
            <person name="Hrabak E.M."/>
            <person name="Harmon A.C."/>
            <person name="Pickard B.G."/>
            <person name="Harper J.F."/>
        </authorList>
    </citation>
    <scope>SUBCELLULAR LOCATION</scope>
</reference>
<feature type="initiator methionine" description="Removed" evidence="3">
    <location>
        <position position="1"/>
    </location>
</feature>
<feature type="chain" id="PRO_0000304511" description="Calcium-dependent protein kinase 7">
    <location>
        <begin position="2"/>
        <end position="535"/>
    </location>
</feature>
<feature type="domain" description="Protein kinase" evidence="4">
    <location>
        <begin position="59"/>
        <end position="317"/>
    </location>
</feature>
<feature type="domain" description="EF-hand 1" evidence="5">
    <location>
        <begin position="360"/>
        <end position="395"/>
    </location>
</feature>
<feature type="domain" description="EF-hand 2" evidence="5">
    <location>
        <begin position="396"/>
        <end position="431"/>
    </location>
</feature>
<feature type="domain" description="EF-hand 3" evidence="5">
    <location>
        <begin position="432"/>
        <end position="467"/>
    </location>
</feature>
<feature type="domain" description="EF-hand 4" evidence="5">
    <location>
        <begin position="468"/>
        <end position="504"/>
    </location>
</feature>
<feature type="region of interest" description="Disordered" evidence="7">
    <location>
        <begin position="1"/>
        <end position="29"/>
    </location>
</feature>
<feature type="region of interest" description="Autoinhibitory domain" evidence="1">
    <location>
        <begin position="323"/>
        <end position="353"/>
    </location>
</feature>
<feature type="active site" description="Proton acceptor" evidence="4 6">
    <location>
        <position position="183"/>
    </location>
</feature>
<feature type="binding site" evidence="4">
    <location>
        <begin position="65"/>
        <end position="73"/>
    </location>
    <ligand>
        <name>ATP</name>
        <dbReference type="ChEBI" id="CHEBI:30616"/>
    </ligand>
</feature>
<feature type="binding site" evidence="4">
    <location>
        <position position="88"/>
    </location>
    <ligand>
        <name>ATP</name>
        <dbReference type="ChEBI" id="CHEBI:30616"/>
    </ligand>
</feature>
<feature type="binding site" evidence="10">
    <location>
        <position position="373"/>
    </location>
    <ligand>
        <name>Ca(2+)</name>
        <dbReference type="ChEBI" id="CHEBI:29108"/>
        <label>1</label>
    </ligand>
</feature>
<feature type="binding site" evidence="10">
    <location>
        <position position="375"/>
    </location>
    <ligand>
        <name>Ca(2+)</name>
        <dbReference type="ChEBI" id="CHEBI:29108"/>
        <label>1</label>
    </ligand>
</feature>
<feature type="binding site" evidence="10">
    <location>
        <position position="379"/>
    </location>
    <ligand>
        <name>Ca(2+)</name>
        <dbReference type="ChEBI" id="CHEBI:29108"/>
        <label>1</label>
    </ligand>
</feature>
<feature type="binding site" evidence="10">
    <location>
        <position position="384"/>
    </location>
    <ligand>
        <name>Ca(2+)</name>
        <dbReference type="ChEBI" id="CHEBI:29108"/>
        <label>1</label>
    </ligand>
</feature>
<feature type="binding site" evidence="5">
    <location>
        <position position="409"/>
    </location>
    <ligand>
        <name>Ca(2+)</name>
        <dbReference type="ChEBI" id="CHEBI:29108"/>
        <label>2</label>
    </ligand>
</feature>
<feature type="binding site" evidence="5">
    <location>
        <position position="411"/>
    </location>
    <ligand>
        <name>Ca(2+)</name>
        <dbReference type="ChEBI" id="CHEBI:29108"/>
        <label>2</label>
    </ligand>
</feature>
<feature type="binding site" evidence="5">
    <location>
        <position position="413"/>
    </location>
    <ligand>
        <name>Ca(2+)</name>
        <dbReference type="ChEBI" id="CHEBI:29108"/>
        <label>2</label>
    </ligand>
</feature>
<feature type="binding site" evidence="5">
    <location>
        <position position="415"/>
    </location>
    <ligand>
        <name>Ca(2+)</name>
        <dbReference type="ChEBI" id="CHEBI:29108"/>
        <label>2</label>
    </ligand>
</feature>
<feature type="binding site" evidence="5">
    <location>
        <position position="420"/>
    </location>
    <ligand>
        <name>Ca(2+)</name>
        <dbReference type="ChEBI" id="CHEBI:29108"/>
        <label>2</label>
    </ligand>
</feature>
<feature type="binding site" evidence="5">
    <location>
        <position position="445"/>
    </location>
    <ligand>
        <name>Ca(2+)</name>
        <dbReference type="ChEBI" id="CHEBI:29108"/>
        <label>3</label>
    </ligand>
</feature>
<feature type="binding site" evidence="5">
    <location>
        <position position="447"/>
    </location>
    <ligand>
        <name>Ca(2+)</name>
        <dbReference type="ChEBI" id="CHEBI:29108"/>
        <label>3</label>
    </ligand>
</feature>
<feature type="binding site" evidence="5">
    <location>
        <position position="449"/>
    </location>
    <ligand>
        <name>Ca(2+)</name>
        <dbReference type="ChEBI" id="CHEBI:29108"/>
        <label>3</label>
    </ligand>
</feature>
<feature type="binding site" evidence="5">
    <location>
        <position position="451"/>
    </location>
    <ligand>
        <name>Ca(2+)</name>
        <dbReference type="ChEBI" id="CHEBI:29108"/>
        <label>3</label>
    </ligand>
</feature>
<feature type="binding site" evidence="5">
    <location>
        <position position="456"/>
    </location>
    <ligand>
        <name>Ca(2+)</name>
        <dbReference type="ChEBI" id="CHEBI:29108"/>
        <label>3</label>
    </ligand>
</feature>
<feature type="binding site" evidence="5">
    <location>
        <position position="482"/>
    </location>
    <ligand>
        <name>Ca(2+)</name>
        <dbReference type="ChEBI" id="CHEBI:29108"/>
        <label>4</label>
    </ligand>
</feature>
<feature type="binding site" evidence="5">
    <location>
        <position position="484"/>
    </location>
    <ligand>
        <name>Ca(2+)</name>
        <dbReference type="ChEBI" id="CHEBI:29108"/>
        <label>4</label>
    </ligand>
</feature>
<feature type="binding site" evidence="5">
    <location>
        <position position="486"/>
    </location>
    <ligand>
        <name>Ca(2+)</name>
        <dbReference type="ChEBI" id="CHEBI:29108"/>
        <label>4</label>
    </ligand>
</feature>
<feature type="binding site" evidence="5">
    <location>
        <position position="488"/>
    </location>
    <ligand>
        <name>Ca(2+)</name>
        <dbReference type="ChEBI" id="CHEBI:29108"/>
        <label>4</label>
    </ligand>
</feature>
<feature type="binding site" evidence="5">
    <location>
        <position position="493"/>
    </location>
    <ligand>
        <name>Ca(2+)</name>
        <dbReference type="ChEBI" id="CHEBI:29108"/>
        <label>4</label>
    </ligand>
</feature>
<feature type="modified residue" description="Phosphoserine" evidence="2">
    <location>
        <position position="223"/>
    </location>
</feature>
<feature type="modified residue" description="Phosphoserine" evidence="2">
    <location>
        <position position="490"/>
    </location>
</feature>
<feature type="lipid moiety-binding region" description="N-myristoyl glycine" evidence="3">
    <location>
        <position position="2"/>
    </location>
</feature>
<feature type="splice variant" id="VSP_028027" description="In isoform 2." evidence="9">
    <location>
        <begin position="1"/>
        <end position="163"/>
    </location>
</feature>
<dbReference type="EC" id="2.7.11.1"/>
<dbReference type="EMBL" id="U31836">
    <property type="protein sequence ID" value="AAB03247.1"/>
    <property type="molecule type" value="mRNA"/>
</dbReference>
<dbReference type="EMBL" id="AL592312">
    <property type="protein sequence ID" value="CAC42909.1"/>
    <property type="molecule type" value="Genomic_DNA"/>
</dbReference>
<dbReference type="EMBL" id="CP002688">
    <property type="protein sequence ID" value="AED91815.1"/>
    <property type="molecule type" value="Genomic_DNA"/>
</dbReference>
<dbReference type="EMBL" id="AF361634">
    <property type="protein sequence ID" value="AAK32802.1"/>
    <property type="molecule type" value="mRNA"/>
</dbReference>
<dbReference type="EMBL" id="AK221718">
    <property type="protein sequence ID" value="BAD95443.1"/>
    <property type="molecule type" value="mRNA"/>
</dbReference>
<dbReference type="RefSeq" id="NP_568281.1">
    <molecule id="Q38873-1"/>
    <property type="nucleotide sequence ID" value="NM_121286.4"/>
</dbReference>
<dbReference type="SMR" id="Q38873"/>
<dbReference type="BioGRID" id="16401">
    <property type="interactions" value="32"/>
</dbReference>
<dbReference type="FunCoup" id="Q38873">
    <property type="interactions" value="2327"/>
</dbReference>
<dbReference type="IntAct" id="Q38873">
    <property type="interactions" value="32"/>
</dbReference>
<dbReference type="STRING" id="3702.Q38873"/>
<dbReference type="iPTMnet" id="Q38873"/>
<dbReference type="PaxDb" id="3702-AT5G12480.1"/>
<dbReference type="ProteomicsDB" id="223880">
    <molecule id="Q38873-1"/>
</dbReference>
<dbReference type="EnsemblPlants" id="AT5G12480.1">
    <molecule id="Q38873-1"/>
    <property type="protein sequence ID" value="AT5G12480.1"/>
    <property type="gene ID" value="AT5G12480"/>
</dbReference>
<dbReference type="GeneID" id="831123"/>
<dbReference type="Gramene" id="AT5G12480.1">
    <molecule id="Q38873-1"/>
    <property type="protein sequence ID" value="AT5G12480.1"/>
    <property type="gene ID" value="AT5G12480"/>
</dbReference>
<dbReference type="KEGG" id="ath:AT5G12480"/>
<dbReference type="Araport" id="AT5G12480"/>
<dbReference type="TAIR" id="AT5G12480">
    <property type="gene designation" value="CPK7"/>
</dbReference>
<dbReference type="eggNOG" id="KOG0032">
    <property type="taxonomic scope" value="Eukaryota"/>
</dbReference>
<dbReference type="HOGENOM" id="CLU_000288_37_3_1"/>
<dbReference type="InParanoid" id="Q38873"/>
<dbReference type="OMA" id="FLISEYC"/>
<dbReference type="OrthoDB" id="40902at2759"/>
<dbReference type="PhylomeDB" id="Q38873"/>
<dbReference type="PRO" id="PR:Q38873"/>
<dbReference type="Proteomes" id="UP000006548">
    <property type="component" value="Chromosome 5"/>
</dbReference>
<dbReference type="ExpressionAtlas" id="Q38873">
    <property type="expression patterns" value="baseline and differential"/>
</dbReference>
<dbReference type="GO" id="GO:0005886">
    <property type="term" value="C:plasma membrane"/>
    <property type="evidence" value="ECO:0007005"/>
    <property type="project" value="TAIR"/>
</dbReference>
<dbReference type="GO" id="GO:0009536">
    <property type="term" value="C:plastid"/>
    <property type="evidence" value="ECO:0007005"/>
    <property type="project" value="TAIR"/>
</dbReference>
<dbReference type="GO" id="GO:0005524">
    <property type="term" value="F:ATP binding"/>
    <property type="evidence" value="ECO:0007669"/>
    <property type="project" value="UniProtKB-KW"/>
</dbReference>
<dbReference type="GO" id="GO:0005509">
    <property type="term" value="F:calcium ion binding"/>
    <property type="evidence" value="ECO:0007669"/>
    <property type="project" value="InterPro"/>
</dbReference>
<dbReference type="GO" id="GO:0106310">
    <property type="term" value="F:protein serine kinase activity"/>
    <property type="evidence" value="ECO:0007669"/>
    <property type="project" value="RHEA"/>
</dbReference>
<dbReference type="GO" id="GO:0004674">
    <property type="term" value="F:protein serine/threonine kinase activity"/>
    <property type="evidence" value="ECO:0007669"/>
    <property type="project" value="UniProtKB-KW"/>
</dbReference>
<dbReference type="CDD" id="cd00051">
    <property type="entry name" value="EFh"/>
    <property type="match status" value="1"/>
</dbReference>
<dbReference type="CDD" id="cd05117">
    <property type="entry name" value="STKc_CAMK"/>
    <property type="match status" value="1"/>
</dbReference>
<dbReference type="FunFam" id="3.30.200.20:FF:000004">
    <property type="entry name" value="Calcium-dependent protein kinase 1"/>
    <property type="match status" value="1"/>
</dbReference>
<dbReference type="FunFam" id="1.10.510.10:FF:000067">
    <property type="entry name" value="calcium-dependent protein kinase 13"/>
    <property type="match status" value="1"/>
</dbReference>
<dbReference type="FunFam" id="1.10.238.10:FF:000050">
    <property type="entry name" value="Calcium-dependent protein kinase 7"/>
    <property type="match status" value="1"/>
</dbReference>
<dbReference type="Gene3D" id="1.10.238.10">
    <property type="entry name" value="EF-hand"/>
    <property type="match status" value="1"/>
</dbReference>
<dbReference type="Gene3D" id="3.30.200.20">
    <property type="entry name" value="Phosphorylase Kinase, domain 1"/>
    <property type="match status" value="1"/>
</dbReference>
<dbReference type="Gene3D" id="1.10.510.10">
    <property type="entry name" value="Transferase(Phosphotransferase) domain 1"/>
    <property type="match status" value="1"/>
</dbReference>
<dbReference type="InterPro" id="IPR050205">
    <property type="entry name" value="CDPK_Ser/Thr_kinases"/>
</dbReference>
<dbReference type="InterPro" id="IPR011992">
    <property type="entry name" value="EF-hand-dom_pair"/>
</dbReference>
<dbReference type="InterPro" id="IPR018247">
    <property type="entry name" value="EF_Hand_1_Ca_BS"/>
</dbReference>
<dbReference type="InterPro" id="IPR002048">
    <property type="entry name" value="EF_hand_dom"/>
</dbReference>
<dbReference type="InterPro" id="IPR011009">
    <property type="entry name" value="Kinase-like_dom_sf"/>
</dbReference>
<dbReference type="InterPro" id="IPR000719">
    <property type="entry name" value="Prot_kinase_dom"/>
</dbReference>
<dbReference type="InterPro" id="IPR017441">
    <property type="entry name" value="Protein_kinase_ATP_BS"/>
</dbReference>
<dbReference type="InterPro" id="IPR008271">
    <property type="entry name" value="Ser/Thr_kinase_AS"/>
</dbReference>
<dbReference type="PANTHER" id="PTHR24349">
    <property type="entry name" value="SERINE/THREONINE-PROTEIN KINASE"/>
    <property type="match status" value="1"/>
</dbReference>
<dbReference type="Pfam" id="PF13499">
    <property type="entry name" value="EF-hand_7"/>
    <property type="match status" value="2"/>
</dbReference>
<dbReference type="Pfam" id="PF00069">
    <property type="entry name" value="Pkinase"/>
    <property type="match status" value="1"/>
</dbReference>
<dbReference type="SMART" id="SM00054">
    <property type="entry name" value="EFh"/>
    <property type="match status" value="4"/>
</dbReference>
<dbReference type="SMART" id="SM00220">
    <property type="entry name" value="S_TKc"/>
    <property type="match status" value="1"/>
</dbReference>
<dbReference type="SUPFAM" id="SSF47473">
    <property type="entry name" value="EF-hand"/>
    <property type="match status" value="1"/>
</dbReference>
<dbReference type="SUPFAM" id="SSF56112">
    <property type="entry name" value="Protein kinase-like (PK-like)"/>
    <property type="match status" value="1"/>
</dbReference>
<dbReference type="PROSITE" id="PS00018">
    <property type="entry name" value="EF_HAND_1"/>
    <property type="match status" value="3"/>
</dbReference>
<dbReference type="PROSITE" id="PS50222">
    <property type="entry name" value="EF_HAND_2"/>
    <property type="match status" value="4"/>
</dbReference>
<dbReference type="PROSITE" id="PS00107">
    <property type="entry name" value="PROTEIN_KINASE_ATP"/>
    <property type="match status" value="1"/>
</dbReference>
<dbReference type="PROSITE" id="PS50011">
    <property type="entry name" value="PROTEIN_KINASE_DOM"/>
    <property type="match status" value="1"/>
</dbReference>
<dbReference type="PROSITE" id="PS00108">
    <property type="entry name" value="PROTEIN_KINASE_ST"/>
    <property type="match status" value="1"/>
</dbReference>
<keyword id="KW-0025">Alternative splicing</keyword>
<keyword id="KW-0067">ATP-binding</keyword>
<keyword id="KW-0106">Calcium</keyword>
<keyword id="KW-1003">Cell membrane</keyword>
<keyword id="KW-0418">Kinase</keyword>
<keyword id="KW-0449">Lipoprotein</keyword>
<keyword id="KW-0472">Membrane</keyword>
<keyword id="KW-0479">Metal-binding</keyword>
<keyword id="KW-0519">Myristate</keyword>
<keyword id="KW-0547">Nucleotide-binding</keyword>
<keyword id="KW-0597">Phosphoprotein</keyword>
<keyword id="KW-1185">Reference proteome</keyword>
<keyword id="KW-0677">Repeat</keyword>
<keyword id="KW-0723">Serine/threonine-protein kinase</keyword>
<keyword id="KW-0808">Transferase</keyword>
<accession>Q38873</accession>
<accession>Q56XF6</accession>
<evidence type="ECO:0000250" key="1"/>
<evidence type="ECO:0000250" key="2">
    <source>
        <dbReference type="UniProtKB" id="Q9FKW4"/>
    </source>
</evidence>
<evidence type="ECO:0000255" key="3"/>
<evidence type="ECO:0000255" key="4">
    <source>
        <dbReference type="PROSITE-ProRule" id="PRU00159"/>
    </source>
</evidence>
<evidence type="ECO:0000255" key="5">
    <source>
        <dbReference type="PROSITE-ProRule" id="PRU00448"/>
    </source>
</evidence>
<evidence type="ECO:0000255" key="6">
    <source>
        <dbReference type="PROSITE-ProRule" id="PRU10027"/>
    </source>
</evidence>
<evidence type="ECO:0000256" key="7">
    <source>
        <dbReference type="SAM" id="MobiDB-lite"/>
    </source>
</evidence>
<evidence type="ECO:0000269" key="8">
    <source>
    </source>
</evidence>
<evidence type="ECO:0000303" key="9">
    <source ref="5"/>
</evidence>
<evidence type="ECO:0000305" key="10"/>
<organism>
    <name type="scientific">Arabidopsis thaliana</name>
    <name type="common">Mouse-ear cress</name>
    <dbReference type="NCBI Taxonomy" id="3702"/>
    <lineage>
        <taxon>Eukaryota</taxon>
        <taxon>Viridiplantae</taxon>
        <taxon>Streptophyta</taxon>
        <taxon>Embryophyta</taxon>
        <taxon>Tracheophyta</taxon>
        <taxon>Spermatophyta</taxon>
        <taxon>Magnoliopsida</taxon>
        <taxon>eudicotyledons</taxon>
        <taxon>Gunneridae</taxon>
        <taxon>Pentapetalae</taxon>
        <taxon>rosids</taxon>
        <taxon>malvids</taxon>
        <taxon>Brassicales</taxon>
        <taxon>Brassicaceae</taxon>
        <taxon>Camelineae</taxon>
        <taxon>Arabidopsis</taxon>
    </lineage>
</organism>
<gene>
    <name type="primary">CPK7</name>
    <name type="ordered locus">At5g12480</name>
    <name type="ORF">F7K24.200</name>
</gene>
<protein>
    <recommendedName>
        <fullName>Calcium-dependent protein kinase 7</fullName>
        <ecNumber>2.7.11.1</ecNumber>
    </recommendedName>
    <alternativeName>
        <fullName>Calmodulin-domain protein kinase CDPK isoform 7</fullName>
    </alternativeName>
</protein>
<name>CDPK7_ARATH</name>
<sequence>MGNCCGNPSSATNQSKQGKPKNKNNPFYSNEYATTDRSGAGFKLSVLKDPTGHDISLQYDLGREVGRGEFGITYLCTDKETGEKYACKSISKKKLRTAVDIEDVRREVEIMKHMPKHPNVVSLKDSFEDDDAVHIVMELCEGGELFDRIVARGHYTERAAAAVMKTIVEVVQICHKQGVMHRDLKPENFLFANKKETSALKAIDFGLSVFFKPGEQFNEIVGSPYYMAPEVLRRNYGPEIDVWSAGVILYILLCGVPPFWAETEQGVAQAIIRSVIDFKRDPWPRVSDSAKDLVRKMLEPDPKKRLTAAQVLEHTWILNAKKAPNVSLGETVKARLKQFSVMNKLKKRALRVIAEHLSVEEAAGIKEAFEMMDVNKRGKINLEELKYGLQKAGQQIADTDLQILMEATDVDGDGTLNYSEFVAVSVHLKKMANDEHLHKAFNFFDQNQSGYIEIDELREALNDELDNTSSEEVIAAIMQDVDTDKDGRISYEEFVAMMKAGTDWRKASRQYSRERFNSLSLKLMRDGSLQLEGET</sequence>
<comment type="function">
    <text>May play a role in signal transduction pathways that involve calcium as a second messenger.</text>
</comment>
<comment type="catalytic activity">
    <reaction>
        <text>L-seryl-[protein] + ATP = O-phospho-L-seryl-[protein] + ADP + H(+)</text>
        <dbReference type="Rhea" id="RHEA:17989"/>
        <dbReference type="Rhea" id="RHEA-COMP:9863"/>
        <dbReference type="Rhea" id="RHEA-COMP:11604"/>
        <dbReference type="ChEBI" id="CHEBI:15378"/>
        <dbReference type="ChEBI" id="CHEBI:29999"/>
        <dbReference type="ChEBI" id="CHEBI:30616"/>
        <dbReference type="ChEBI" id="CHEBI:83421"/>
        <dbReference type="ChEBI" id="CHEBI:456216"/>
        <dbReference type="EC" id="2.7.11.1"/>
    </reaction>
</comment>
<comment type="catalytic activity">
    <reaction>
        <text>L-threonyl-[protein] + ATP = O-phospho-L-threonyl-[protein] + ADP + H(+)</text>
        <dbReference type="Rhea" id="RHEA:46608"/>
        <dbReference type="Rhea" id="RHEA-COMP:11060"/>
        <dbReference type="Rhea" id="RHEA-COMP:11605"/>
        <dbReference type="ChEBI" id="CHEBI:15378"/>
        <dbReference type="ChEBI" id="CHEBI:30013"/>
        <dbReference type="ChEBI" id="CHEBI:30616"/>
        <dbReference type="ChEBI" id="CHEBI:61977"/>
        <dbReference type="ChEBI" id="CHEBI:456216"/>
        <dbReference type="EC" id="2.7.11.1"/>
    </reaction>
</comment>
<comment type="activity regulation">
    <text>Activated by calcium. Autophosphorylation may play an important role in the regulation of the kinase activity.</text>
</comment>
<comment type="subcellular location">
    <subcellularLocation>
        <location evidence="8">Cell membrane</location>
        <topology evidence="8">Lipid-anchor</topology>
    </subcellularLocation>
</comment>
<comment type="alternative products">
    <event type="alternative splicing"/>
    <isoform>
        <id>Q38873-1</id>
        <name>1</name>
        <sequence type="displayed"/>
    </isoform>
    <isoform>
        <id>Q38873-2</id>
        <name>2</name>
        <sequence type="described" ref="VSP_028027"/>
    </isoform>
</comment>
<comment type="domain">
    <text evidence="1">There are 3 contiguous domains conserved in the CDPK subfamily: a kinase domain, an autoinhibitory (junction) domain and a calmodulin-like domain. The autoinhibitory domain (323-353) inactivates kinase activity under calcium-free conditions (By similarity).</text>
</comment>
<comment type="similarity">
    <text evidence="4">Belongs to the protein kinase superfamily. Ser/Thr protein kinase family. CDPK subfamily.</text>
</comment>
<proteinExistence type="evidence at transcript level"/>